<reference key="1">
    <citation type="journal article" date="1997" name="Microbiology">
        <title>The flagellin N-methylase gene fliB and an adjacent serovar-specific IS200 element in Salmonella typhimurium.</title>
        <authorList>
            <person name="Burnens A.P."/>
            <person name="Stanley J."/>
            <person name="Sack R."/>
            <person name="Hunziker P."/>
            <person name="Brodard I."/>
            <person name="Nicolet J."/>
        </authorList>
    </citation>
    <scope>NUCLEOTIDE SEQUENCE [GENOMIC DNA]</scope>
    <source>
        <strain>168-94</strain>
        <strain>LT2 / ATCC 23564</strain>
    </source>
</reference>
<reference key="2">
    <citation type="journal article" date="2001" name="Nature">
        <title>Complete genome sequence of Salmonella enterica serovar Typhimurium LT2.</title>
        <authorList>
            <person name="McClelland M."/>
            <person name="Sanderson K.E."/>
            <person name="Spieth J."/>
            <person name="Clifton S.W."/>
            <person name="Latreille P."/>
            <person name="Courtney L."/>
            <person name="Porwollik S."/>
            <person name="Ali J."/>
            <person name="Dante M."/>
            <person name="Du F."/>
            <person name="Hou S."/>
            <person name="Layman D."/>
            <person name="Leonard S."/>
            <person name="Nguyen C."/>
            <person name="Scott K."/>
            <person name="Holmes A."/>
            <person name="Grewal N."/>
            <person name="Mulvaney E."/>
            <person name="Ryan E."/>
            <person name="Sun H."/>
            <person name="Florea L."/>
            <person name="Miller W."/>
            <person name="Stoneking T."/>
            <person name="Nhan M."/>
            <person name="Waterston R."/>
            <person name="Wilson R.K."/>
        </authorList>
    </citation>
    <scope>NUCLEOTIDE SEQUENCE [LARGE SCALE GENOMIC DNA]</scope>
    <source>
        <strain>LT2 / SGSC1412 / ATCC 700720</strain>
    </source>
</reference>
<comment type="function">
    <text>Post-translationally modifies flagellin by methylation of epsilon amino group of surface-exposed lysine residues.</text>
</comment>
<comment type="similarity">
    <text evidence="1">Belongs to the FliB family.</text>
</comment>
<name>FLIB_SALTY</name>
<protein>
    <recommendedName>
        <fullName>Lysine-N-methylase</fullName>
        <ecNumber>2.1.1.-</ecNumber>
    </recommendedName>
    <alternativeName>
        <fullName>Lysine N-methyltransferase</fullName>
    </alternativeName>
</protein>
<sequence>MKEITVTEPAFVTRFSCSGSACRDHCCKGWKITLDKTTVKKYLASKDTTIRTIAQDHIILLKKNNSHWGEIKLPSALGNCPYLDEDRLCRVQKTLGAKALSHTCSSFPRAHHTYKNEVRNSLSLACPEVTSRILNDPDAMALSEKTIIQQTFNTAPLFPAQQKLLNLFCLSLINHANSSTEAALYALIKFVMYAQKFAKIDDAALGELEQVYAALLEQLQTGVLAQELMNIAPDSKVKTSLVLQMQDYFRSLPLNRGSVILDHYIQCLLRVLTAEEGVSMEQKVSDIESSLARCLQANEQQKNWAFRNLILYKIWENNFPNQPNVDPLRALYIIVAEYAFIKLLTAASVHERGRIEWDDVTNIVYSFHSRSQHNSEVAKNFHRHIETVRTGDDLSMIHLLT</sequence>
<gene>
    <name type="primary">fliB</name>
    <name type="synonym">nml</name>
    <name type="ordered locus">STM1958</name>
</gene>
<evidence type="ECO:0000305" key="1"/>
<proteinExistence type="inferred from homology"/>
<accession>Q56106</accession>
<accession>Q56087</accession>
<keyword id="KW-0489">Methyltransferase</keyword>
<keyword id="KW-1185">Reference proteome</keyword>
<keyword id="KW-0808">Transferase</keyword>
<dbReference type="EC" id="2.1.1.-"/>
<dbReference type="EMBL" id="Z54217">
    <property type="protein sequence ID" value="CAA90951.1"/>
    <property type="molecule type" value="Genomic_DNA"/>
</dbReference>
<dbReference type="EMBL" id="Z67749">
    <property type="protein sequence ID" value="CAA91562.1"/>
    <property type="molecule type" value="Genomic_DNA"/>
</dbReference>
<dbReference type="EMBL" id="AE006468">
    <property type="protein sequence ID" value="AAL20870.1"/>
    <property type="molecule type" value="Genomic_DNA"/>
</dbReference>
<dbReference type="RefSeq" id="NP_460911.1">
    <property type="nucleotide sequence ID" value="NC_003197.2"/>
</dbReference>
<dbReference type="RefSeq" id="WP_000659236.1">
    <property type="nucleotide sequence ID" value="NC_003197.2"/>
</dbReference>
<dbReference type="STRING" id="99287.STM1958"/>
<dbReference type="PaxDb" id="99287-STM1958"/>
<dbReference type="GeneID" id="1253479"/>
<dbReference type="KEGG" id="stm:STM1958"/>
<dbReference type="PATRIC" id="fig|99287.12.peg.2073"/>
<dbReference type="HOGENOM" id="CLU_051643_1_1_6"/>
<dbReference type="OMA" id="SCCIGWD"/>
<dbReference type="PhylomeDB" id="Q56106"/>
<dbReference type="BioCyc" id="SENT99287:STM1958-MONOMER"/>
<dbReference type="Proteomes" id="UP000001014">
    <property type="component" value="Chromosome"/>
</dbReference>
<dbReference type="GO" id="GO:0008168">
    <property type="term" value="F:methyltransferase activity"/>
    <property type="evidence" value="ECO:0007669"/>
    <property type="project" value="UniProtKB-KW"/>
</dbReference>
<dbReference type="GO" id="GO:0032259">
    <property type="term" value="P:methylation"/>
    <property type="evidence" value="ECO:0007669"/>
    <property type="project" value="UniProtKB-KW"/>
</dbReference>
<dbReference type="NCBIfam" id="NF038110">
    <property type="entry name" value="Lys_methyl_FliB"/>
    <property type="match status" value="1"/>
</dbReference>
<feature type="chain" id="PRO_0000219867" description="Lysine-N-methylase">
    <location>
        <begin position="1"/>
        <end position="401"/>
    </location>
</feature>
<organism>
    <name type="scientific">Salmonella typhimurium (strain LT2 / SGSC1412 / ATCC 700720)</name>
    <dbReference type="NCBI Taxonomy" id="99287"/>
    <lineage>
        <taxon>Bacteria</taxon>
        <taxon>Pseudomonadati</taxon>
        <taxon>Pseudomonadota</taxon>
        <taxon>Gammaproteobacteria</taxon>
        <taxon>Enterobacterales</taxon>
        <taxon>Enterobacteriaceae</taxon>
        <taxon>Salmonella</taxon>
    </lineage>
</organism>